<sequence>MFSTSDQVSKMNSRILSALLILGIATCVIAGGFCPKSRHPQCNLSYKINDCCAQSDCRVGSVCCVEGCGNVCRAESDTPLGEKFVDGSECKHGHVFPKKWYQFWWRV</sequence>
<protein>
    <recommendedName>
        <fullName>U20-lycotoxin-Ls1b</fullName>
    </recommendedName>
    <alternativeName>
        <fullName>Toxin-like structure LSTX-Q2</fullName>
    </alternativeName>
</protein>
<organism>
    <name type="scientific">Lycosa singoriensis</name>
    <name type="common">Wolf spider</name>
    <name type="synonym">Aranea singoriensis</name>
    <dbReference type="NCBI Taxonomy" id="434756"/>
    <lineage>
        <taxon>Eukaryota</taxon>
        <taxon>Metazoa</taxon>
        <taxon>Ecdysozoa</taxon>
        <taxon>Arthropoda</taxon>
        <taxon>Chelicerata</taxon>
        <taxon>Arachnida</taxon>
        <taxon>Araneae</taxon>
        <taxon>Araneomorphae</taxon>
        <taxon>Entelegynae</taxon>
        <taxon>Lycosoidea</taxon>
        <taxon>Lycosidae</taxon>
        <taxon>Lycosa</taxon>
    </lineage>
</organism>
<name>TXK02_LYCSI</name>
<proteinExistence type="evidence at transcript level"/>
<accession>B6DD61</accession>
<evidence type="ECO:0000250" key="1"/>
<evidence type="ECO:0000255" key="2"/>
<evidence type="ECO:0000305" key="3"/>
<reference key="1">
    <citation type="journal article" date="2010" name="Zoology">
        <title>Transcriptome analysis of the venom glands of the Chinese wolf spider Lycosa singoriensis.</title>
        <authorList>
            <person name="Zhang Y."/>
            <person name="Chen J."/>
            <person name="Tang X."/>
            <person name="Wang F."/>
            <person name="Jiang L."/>
            <person name="Xiong X."/>
            <person name="Wang M."/>
            <person name="Rong M."/>
            <person name="Liu Z."/>
            <person name="Liang S."/>
        </authorList>
    </citation>
    <scope>NUCLEOTIDE SEQUENCE [LARGE SCALE MRNA]</scope>
    <source>
        <tissue>Venom gland</tissue>
    </source>
</reference>
<dbReference type="EMBL" id="EU926145">
    <property type="protein sequence ID" value="ACI41477.1"/>
    <property type="molecule type" value="mRNA"/>
</dbReference>
<dbReference type="EMBL" id="FM864149">
    <property type="protein sequence ID" value="CAS03746.1"/>
    <property type="molecule type" value="mRNA"/>
</dbReference>
<dbReference type="SMR" id="B6DD61"/>
<dbReference type="ArachnoServer" id="AS001084">
    <property type="toxin name" value="U20-lycotoxin-Ls1b"/>
</dbReference>
<dbReference type="GO" id="GO:0005576">
    <property type="term" value="C:extracellular region"/>
    <property type="evidence" value="ECO:0007669"/>
    <property type="project" value="UniProtKB-SubCell"/>
</dbReference>
<dbReference type="GO" id="GO:0090729">
    <property type="term" value="F:toxin activity"/>
    <property type="evidence" value="ECO:0007669"/>
    <property type="project" value="UniProtKB-KW"/>
</dbReference>
<dbReference type="GO" id="GO:0042742">
    <property type="term" value="P:defense response to bacterium"/>
    <property type="evidence" value="ECO:0007669"/>
    <property type="project" value="UniProtKB-KW"/>
</dbReference>
<dbReference type="InterPro" id="IPR036645">
    <property type="entry name" value="Elafin-like_sf"/>
</dbReference>
<dbReference type="SUPFAM" id="SSF57256">
    <property type="entry name" value="Elafin-like"/>
    <property type="match status" value="1"/>
</dbReference>
<comment type="function">
    <text evidence="1">Has antibacterial activity.</text>
</comment>
<comment type="subcellular location">
    <subcellularLocation>
        <location evidence="1">Secreted</location>
    </subcellularLocation>
</comment>
<comment type="tissue specificity">
    <text>Expressed by the venom gland.</text>
</comment>
<comment type="PTM">
    <text evidence="3">Contains 5 disulfide bonds.</text>
</comment>
<comment type="similarity">
    <text evidence="3">Belongs to the venom protein 11 family. 02 (wap-2) subfamily.</text>
</comment>
<keyword id="KW-0044">Antibiotic</keyword>
<keyword id="KW-0929">Antimicrobial</keyword>
<keyword id="KW-1015">Disulfide bond</keyword>
<keyword id="KW-0964">Secreted</keyword>
<keyword id="KW-0732">Signal</keyword>
<keyword id="KW-0800">Toxin</keyword>
<feature type="signal peptide" evidence="2">
    <location>
        <begin position="1"/>
        <end position="30"/>
    </location>
</feature>
<feature type="chain" id="PRO_0000401910" description="U20-lycotoxin-Ls1b">
    <location>
        <begin position="31"/>
        <end position="107"/>
    </location>
</feature>
<feature type="domain" description="WAP">
    <location>
        <begin position="31"/>
        <end position="76"/>
    </location>
</feature>
<feature type="disulfide bond" evidence="1">
    <location>
        <begin position="34"/>
        <end position="64"/>
    </location>
</feature>
<feature type="disulfide bond" evidence="1">
    <location>
        <begin position="42"/>
        <end position="68"/>
    </location>
</feature>
<feature type="disulfide bond" evidence="1">
    <location>
        <begin position="51"/>
        <end position="63"/>
    </location>
</feature>
<feature type="disulfide bond" evidence="3">
    <location>
        <begin position="52"/>
        <end position="90"/>
    </location>
</feature>
<feature type="disulfide bond" evidence="1">
    <location>
        <begin position="57"/>
        <end position="72"/>
    </location>
</feature>